<proteinExistence type="inferred from homology"/>
<accession>B4E9G0</accession>
<comment type="function">
    <text evidence="1">Activates KDO (a required 8-carbon sugar) for incorporation into bacterial lipopolysaccharide in Gram-negative bacteria.</text>
</comment>
<comment type="catalytic activity">
    <reaction evidence="1">
        <text>3-deoxy-alpha-D-manno-oct-2-ulosonate + CTP = CMP-3-deoxy-beta-D-manno-octulosonate + diphosphate</text>
        <dbReference type="Rhea" id="RHEA:23448"/>
        <dbReference type="ChEBI" id="CHEBI:33019"/>
        <dbReference type="ChEBI" id="CHEBI:37563"/>
        <dbReference type="ChEBI" id="CHEBI:85986"/>
        <dbReference type="ChEBI" id="CHEBI:85987"/>
        <dbReference type="EC" id="2.7.7.38"/>
    </reaction>
</comment>
<comment type="pathway">
    <text evidence="1">Nucleotide-sugar biosynthesis; CMP-3-deoxy-D-manno-octulosonate biosynthesis; CMP-3-deoxy-D-manno-octulosonate from 3-deoxy-D-manno-octulosonate and CTP: step 1/1.</text>
</comment>
<comment type="pathway">
    <text evidence="1">Bacterial outer membrane biogenesis; lipopolysaccharide biosynthesis.</text>
</comment>
<comment type="subcellular location">
    <subcellularLocation>
        <location evidence="1">Cytoplasm</location>
    </subcellularLocation>
</comment>
<comment type="similarity">
    <text evidence="1">Belongs to the KdsB family.</text>
</comment>
<gene>
    <name evidence="1" type="primary">kdsB</name>
    <name type="ordered locus">BceJ2315_26990</name>
    <name type="ORF">BCAL2761</name>
</gene>
<organism>
    <name type="scientific">Burkholderia cenocepacia (strain ATCC BAA-245 / DSM 16553 / LMG 16656 / NCTC 13227 / J2315 / CF5610)</name>
    <name type="common">Burkholderia cepacia (strain J2315)</name>
    <dbReference type="NCBI Taxonomy" id="216591"/>
    <lineage>
        <taxon>Bacteria</taxon>
        <taxon>Pseudomonadati</taxon>
        <taxon>Pseudomonadota</taxon>
        <taxon>Betaproteobacteria</taxon>
        <taxon>Burkholderiales</taxon>
        <taxon>Burkholderiaceae</taxon>
        <taxon>Burkholderia</taxon>
        <taxon>Burkholderia cepacia complex</taxon>
    </lineage>
</organism>
<protein>
    <recommendedName>
        <fullName evidence="1">3-deoxy-manno-octulosonate cytidylyltransferase</fullName>
        <ecNumber evidence="1">2.7.7.38</ecNumber>
    </recommendedName>
    <alternativeName>
        <fullName evidence="1">CMP-2-keto-3-deoxyoctulosonic acid synthase</fullName>
        <shortName evidence="1">CKS</shortName>
        <shortName evidence="1">CMP-KDO synthase</shortName>
    </alternativeName>
</protein>
<keyword id="KW-0963">Cytoplasm</keyword>
<keyword id="KW-0448">Lipopolysaccharide biosynthesis</keyword>
<keyword id="KW-0548">Nucleotidyltransferase</keyword>
<keyword id="KW-0808">Transferase</keyword>
<reference key="1">
    <citation type="journal article" date="2009" name="J. Bacteriol.">
        <title>The genome of Burkholderia cenocepacia J2315, an epidemic pathogen of cystic fibrosis patients.</title>
        <authorList>
            <person name="Holden M.T."/>
            <person name="Seth-Smith H.M."/>
            <person name="Crossman L.C."/>
            <person name="Sebaihia M."/>
            <person name="Bentley S.D."/>
            <person name="Cerdeno-Tarraga A.M."/>
            <person name="Thomson N.R."/>
            <person name="Bason N."/>
            <person name="Quail M.A."/>
            <person name="Sharp S."/>
            <person name="Cherevach I."/>
            <person name="Churcher C."/>
            <person name="Goodhead I."/>
            <person name="Hauser H."/>
            <person name="Holroyd N."/>
            <person name="Mungall K."/>
            <person name="Scott P."/>
            <person name="Walker D."/>
            <person name="White B."/>
            <person name="Rose H."/>
            <person name="Iversen P."/>
            <person name="Mil-Homens D."/>
            <person name="Rocha E.P."/>
            <person name="Fialho A.M."/>
            <person name="Baldwin A."/>
            <person name="Dowson C."/>
            <person name="Barrell B.G."/>
            <person name="Govan J.R."/>
            <person name="Vandamme P."/>
            <person name="Hart C.A."/>
            <person name="Mahenthiralingam E."/>
            <person name="Parkhill J."/>
        </authorList>
    </citation>
    <scope>NUCLEOTIDE SEQUENCE [LARGE SCALE GENOMIC DNA]</scope>
    <source>
        <strain>ATCC BAA-245 / DSM 16553 / LMG 16656 / NCTC 13227 / J2315 / CF5610</strain>
    </source>
</reference>
<feature type="chain" id="PRO_0000370026" description="3-deoxy-manno-octulosonate cytidylyltransferase">
    <location>
        <begin position="1"/>
        <end position="263"/>
    </location>
</feature>
<dbReference type="EC" id="2.7.7.38" evidence="1"/>
<dbReference type="EMBL" id="AM747720">
    <property type="protein sequence ID" value="CAR53061.1"/>
    <property type="molecule type" value="Genomic_DNA"/>
</dbReference>
<dbReference type="RefSeq" id="WP_006482208.1">
    <property type="nucleotide sequence ID" value="NC_011000.1"/>
</dbReference>
<dbReference type="SMR" id="B4E9G0"/>
<dbReference type="GeneID" id="56559133"/>
<dbReference type="KEGG" id="bcj:BCAL2761"/>
<dbReference type="eggNOG" id="COG1212">
    <property type="taxonomic scope" value="Bacteria"/>
</dbReference>
<dbReference type="HOGENOM" id="CLU_065038_1_0_4"/>
<dbReference type="BioCyc" id="BCEN216591:G1G1V-3059-MONOMER"/>
<dbReference type="UniPathway" id="UPA00030"/>
<dbReference type="UniPathway" id="UPA00358">
    <property type="reaction ID" value="UER00476"/>
</dbReference>
<dbReference type="Proteomes" id="UP000001035">
    <property type="component" value="Chromosome 1"/>
</dbReference>
<dbReference type="GO" id="GO:0005829">
    <property type="term" value="C:cytosol"/>
    <property type="evidence" value="ECO:0007669"/>
    <property type="project" value="TreeGrafter"/>
</dbReference>
<dbReference type="GO" id="GO:0008690">
    <property type="term" value="F:3-deoxy-manno-octulosonate cytidylyltransferase activity"/>
    <property type="evidence" value="ECO:0007669"/>
    <property type="project" value="UniProtKB-UniRule"/>
</dbReference>
<dbReference type="GO" id="GO:0033468">
    <property type="term" value="P:CMP-keto-3-deoxy-D-manno-octulosonic acid biosynthetic process"/>
    <property type="evidence" value="ECO:0007669"/>
    <property type="project" value="UniProtKB-UniRule"/>
</dbReference>
<dbReference type="GO" id="GO:0009103">
    <property type="term" value="P:lipopolysaccharide biosynthetic process"/>
    <property type="evidence" value="ECO:0007669"/>
    <property type="project" value="UniProtKB-UniRule"/>
</dbReference>
<dbReference type="CDD" id="cd02517">
    <property type="entry name" value="CMP-KDO-Synthetase"/>
    <property type="match status" value="1"/>
</dbReference>
<dbReference type="FunFam" id="3.90.550.10:FF:000011">
    <property type="entry name" value="3-deoxy-manno-octulosonate cytidylyltransferase"/>
    <property type="match status" value="1"/>
</dbReference>
<dbReference type="Gene3D" id="3.90.550.10">
    <property type="entry name" value="Spore Coat Polysaccharide Biosynthesis Protein SpsA, Chain A"/>
    <property type="match status" value="1"/>
</dbReference>
<dbReference type="HAMAP" id="MF_00057">
    <property type="entry name" value="KdsB"/>
    <property type="match status" value="1"/>
</dbReference>
<dbReference type="InterPro" id="IPR003329">
    <property type="entry name" value="Cytidylyl_trans"/>
</dbReference>
<dbReference type="InterPro" id="IPR004528">
    <property type="entry name" value="KdsB"/>
</dbReference>
<dbReference type="InterPro" id="IPR029044">
    <property type="entry name" value="Nucleotide-diphossugar_trans"/>
</dbReference>
<dbReference type="NCBIfam" id="TIGR00466">
    <property type="entry name" value="kdsB"/>
    <property type="match status" value="1"/>
</dbReference>
<dbReference type="NCBIfam" id="NF003952">
    <property type="entry name" value="PRK05450.1-5"/>
    <property type="match status" value="1"/>
</dbReference>
<dbReference type="NCBIfam" id="NF009905">
    <property type="entry name" value="PRK13368.1"/>
    <property type="match status" value="1"/>
</dbReference>
<dbReference type="PANTHER" id="PTHR42866">
    <property type="entry name" value="3-DEOXY-MANNO-OCTULOSONATE CYTIDYLYLTRANSFERASE"/>
    <property type="match status" value="1"/>
</dbReference>
<dbReference type="PANTHER" id="PTHR42866:SF2">
    <property type="entry name" value="3-DEOXY-MANNO-OCTULOSONATE CYTIDYLYLTRANSFERASE, MITOCHONDRIAL"/>
    <property type="match status" value="1"/>
</dbReference>
<dbReference type="Pfam" id="PF02348">
    <property type="entry name" value="CTP_transf_3"/>
    <property type="match status" value="1"/>
</dbReference>
<dbReference type="SUPFAM" id="SSF53448">
    <property type="entry name" value="Nucleotide-diphospho-sugar transferases"/>
    <property type="match status" value="1"/>
</dbReference>
<name>KDSB_BURCJ</name>
<evidence type="ECO:0000255" key="1">
    <source>
        <dbReference type="HAMAP-Rule" id="MF_00057"/>
    </source>
</evidence>
<sequence>MTHPQPFIAVIPARLASTRLPNKPLADLGGKPMVVRVAERAREAGAQQVLVASDAQSVLDAARDHGFEAVLTRADHPSGTDRLAEVAAAFGWRDDTVVVNVQGDEPLIDPVLVRDVASHLAAHPACAIATAAHPIHDAADVFNPNVVKVALDAQSVALYFSRAPIPWSRDAYQPHWPDVAAMPAPAFPVYRHIGLYAYRARFLRTYPSLAQAPIEQAEQLEQLRALWHGERIAVLITESAPEAGIDTPADLARVQALFQPGSK</sequence>